<proteinExistence type="inferred from homology"/>
<dbReference type="EC" id="3.5.2.7" evidence="1"/>
<dbReference type="EMBL" id="CP000857">
    <property type="protein sequence ID" value="ACN44957.1"/>
    <property type="molecule type" value="Genomic_DNA"/>
</dbReference>
<dbReference type="RefSeq" id="WP_001249499.1">
    <property type="nucleotide sequence ID" value="NC_012125.1"/>
</dbReference>
<dbReference type="SMR" id="C0PWX5"/>
<dbReference type="KEGG" id="sei:SPC_0783"/>
<dbReference type="HOGENOM" id="CLU_041647_0_0_6"/>
<dbReference type="UniPathway" id="UPA00379">
    <property type="reaction ID" value="UER00551"/>
</dbReference>
<dbReference type="Proteomes" id="UP000001599">
    <property type="component" value="Chromosome"/>
</dbReference>
<dbReference type="GO" id="GO:0005737">
    <property type="term" value="C:cytoplasm"/>
    <property type="evidence" value="ECO:0007669"/>
    <property type="project" value="UniProtKB-SubCell"/>
</dbReference>
<dbReference type="GO" id="GO:0050480">
    <property type="term" value="F:imidazolonepropionase activity"/>
    <property type="evidence" value="ECO:0007669"/>
    <property type="project" value="UniProtKB-UniRule"/>
</dbReference>
<dbReference type="GO" id="GO:0005506">
    <property type="term" value="F:iron ion binding"/>
    <property type="evidence" value="ECO:0007669"/>
    <property type="project" value="UniProtKB-UniRule"/>
</dbReference>
<dbReference type="GO" id="GO:0008270">
    <property type="term" value="F:zinc ion binding"/>
    <property type="evidence" value="ECO:0007669"/>
    <property type="project" value="UniProtKB-UniRule"/>
</dbReference>
<dbReference type="GO" id="GO:0019556">
    <property type="term" value="P:L-histidine catabolic process to glutamate and formamide"/>
    <property type="evidence" value="ECO:0007669"/>
    <property type="project" value="UniProtKB-UniPathway"/>
</dbReference>
<dbReference type="GO" id="GO:0019557">
    <property type="term" value="P:L-histidine catabolic process to glutamate and formate"/>
    <property type="evidence" value="ECO:0007669"/>
    <property type="project" value="UniProtKB-UniPathway"/>
</dbReference>
<dbReference type="CDD" id="cd01296">
    <property type="entry name" value="Imidazolone-5PH"/>
    <property type="match status" value="1"/>
</dbReference>
<dbReference type="FunFam" id="3.20.20.140:FF:000007">
    <property type="entry name" value="Imidazolonepropionase"/>
    <property type="match status" value="1"/>
</dbReference>
<dbReference type="Gene3D" id="3.20.20.140">
    <property type="entry name" value="Metal-dependent hydrolases"/>
    <property type="match status" value="1"/>
</dbReference>
<dbReference type="Gene3D" id="2.30.40.10">
    <property type="entry name" value="Urease, subunit C, domain 1"/>
    <property type="match status" value="1"/>
</dbReference>
<dbReference type="HAMAP" id="MF_00372">
    <property type="entry name" value="HutI"/>
    <property type="match status" value="1"/>
</dbReference>
<dbReference type="InterPro" id="IPR006680">
    <property type="entry name" value="Amidohydro-rel"/>
</dbReference>
<dbReference type="InterPro" id="IPR005920">
    <property type="entry name" value="HutI"/>
</dbReference>
<dbReference type="InterPro" id="IPR011059">
    <property type="entry name" value="Metal-dep_hydrolase_composite"/>
</dbReference>
<dbReference type="InterPro" id="IPR032466">
    <property type="entry name" value="Metal_Hydrolase"/>
</dbReference>
<dbReference type="NCBIfam" id="TIGR01224">
    <property type="entry name" value="hutI"/>
    <property type="match status" value="1"/>
</dbReference>
<dbReference type="PANTHER" id="PTHR42752">
    <property type="entry name" value="IMIDAZOLONEPROPIONASE"/>
    <property type="match status" value="1"/>
</dbReference>
<dbReference type="PANTHER" id="PTHR42752:SF1">
    <property type="entry name" value="IMIDAZOLONEPROPIONASE-RELATED"/>
    <property type="match status" value="1"/>
</dbReference>
<dbReference type="Pfam" id="PF01979">
    <property type="entry name" value="Amidohydro_1"/>
    <property type="match status" value="1"/>
</dbReference>
<dbReference type="SUPFAM" id="SSF51338">
    <property type="entry name" value="Composite domain of metallo-dependent hydrolases"/>
    <property type="match status" value="1"/>
</dbReference>
<dbReference type="SUPFAM" id="SSF51556">
    <property type="entry name" value="Metallo-dependent hydrolases"/>
    <property type="match status" value="1"/>
</dbReference>
<evidence type="ECO:0000255" key="1">
    <source>
        <dbReference type="HAMAP-Rule" id="MF_00372"/>
    </source>
</evidence>
<keyword id="KW-0963">Cytoplasm</keyword>
<keyword id="KW-0369">Histidine metabolism</keyword>
<keyword id="KW-0378">Hydrolase</keyword>
<keyword id="KW-0408">Iron</keyword>
<keyword id="KW-0479">Metal-binding</keyword>
<keyword id="KW-0862">Zinc</keyword>
<reference key="1">
    <citation type="journal article" date="2009" name="PLoS ONE">
        <title>Salmonella paratyphi C: genetic divergence from Salmonella choleraesuis and pathogenic convergence with Salmonella typhi.</title>
        <authorList>
            <person name="Liu W.-Q."/>
            <person name="Feng Y."/>
            <person name="Wang Y."/>
            <person name="Zou Q.-H."/>
            <person name="Chen F."/>
            <person name="Guo J.-T."/>
            <person name="Peng Y.-H."/>
            <person name="Jin Y."/>
            <person name="Li Y.-G."/>
            <person name="Hu S.-N."/>
            <person name="Johnston R.N."/>
            <person name="Liu G.-R."/>
            <person name="Liu S.-L."/>
        </authorList>
    </citation>
    <scope>NUCLEOTIDE SEQUENCE [LARGE SCALE GENOMIC DNA]</scope>
    <source>
        <strain>RKS4594</strain>
    </source>
</reference>
<feature type="chain" id="PRO_1000133886" description="Imidazolonepropionase">
    <location>
        <begin position="1"/>
        <end position="407"/>
    </location>
</feature>
<feature type="binding site" evidence="1">
    <location>
        <position position="74"/>
    </location>
    <ligand>
        <name>Fe(3+)</name>
        <dbReference type="ChEBI" id="CHEBI:29034"/>
    </ligand>
</feature>
<feature type="binding site" evidence="1">
    <location>
        <position position="74"/>
    </location>
    <ligand>
        <name>Zn(2+)</name>
        <dbReference type="ChEBI" id="CHEBI:29105"/>
    </ligand>
</feature>
<feature type="binding site" evidence="1">
    <location>
        <position position="76"/>
    </location>
    <ligand>
        <name>Fe(3+)</name>
        <dbReference type="ChEBI" id="CHEBI:29034"/>
    </ligand>
</feature>
<feature type="binding site" evidence="1">
    <location>
        <position position="76"/>
    </location>
    <ligand>
        <name>Zn(2+)</name>
        <dbReference type="ChEBI" id="CHEBI:29105"/>
    </ligand>
</feature>
<feature type="binding site" evidence="1">
    <location>
        <position position="83"/>
    </location>
    <ligand>
        <name>4-imidazolone-5-propanoate</name>
        <dbReference type="ChEBI" id="CHEBI:77893"/>
    </ligand>
</feature>
<feature type="binding site" evidence="1">
    <location>
        <position position="146"/>
    </location>
    <ligand>
        <name>4-imidazolone-5-propanoate</name>
        <dbReference type="ChEBI" id="CHEBI:77893"/>
    </ligand>
</feature>
<feature type="binding site" evidence="1">
    <location>
        <position position="146"/>
    </location>
    <ligand>
        <name>N-formimidoyl-L-glutamate</name>
        <dbReference type="ChEBI" id="CHEBI:58928"/>
    </ligand>
</feature>
<feature type="binding site" evidence="1">
    <location>
        <position position="179"/>
    </location>
    <ligand>
        <name>4-imidazolone-5-propanoate</name>
        <dbReference type="ChEBI" id="CHEBI:77893"/>
    </ligand>
</feature>
<feature type="binding site" evidence="1">
    <location>
        <position position="244"/>
    </location>
    <ligand>
        <name>Fe(3+)</name>
        <dbReference type="ChEBI" id="CHEBI:29034"/>
    </ligand>
</feature>
<feature type="binding site" evidence="1">
    <location>
        <position position="244"/>
    </location>
    <ligand>
        <name>Zn(2+)</name>
        <dbReference type="ChEBI" id="CHEBI:29105"/>
    </ligand>
</feature>
<feature type="binding site" evidence="1">
    <location>
        <position position="247"/>
    </location>
    <ligand>
        <name>4-imidazolone-5-propanoate</name>
        <dbReference type="ChEBI" id="CHEBI:77893"/>
    </ligand>
</feature>
<feature type="binding site" evidence="1">
    <location>
        <position position="319"/>
    </location>
    <ligand>
        <name>Fe(3+)</name>
        <dbReference type="ChEBI" id="CHEBI:29034"/>
    </ligand>
</feature>
<feature type="binding site" evidence="1">
    <location>
        <position position="319"/>
    </location>
    <ligand>
        <name>Zn(2+)</name>
        <dbReference type="ChEBI" id="CHEBI:29105"/>
    </ligand>
</feature>
<feature type="binding site" evidence="1">
    <location>
        <position position="321"/>
    </location>
    <ligand>
        <name>N-formimidoyl-L-glutamate</name>
        <dbReference type="ChEBI" id="CHEBI:58928"/>
    </ligand>
</feature>
<feature type="binding site" evidence="1">
    <location>
        <position position="323"/>
    </location>
    <ligand>
        <name>N-formimidoyl-L-glutamate</name>
        <dbReference type="ChEBI" id="CHEBI:58928"/>
    </ligand>
</feature>
<feature type="binding site" evidence="1">
    <location>
        <position position="324"/>
    </location>
    <ligand>
        <name>4-imidazolone-5-propanoate</name>
        <dbReference type="ChEBI" id="CHEBI:77893"/>
    </ligand>
</feature>
<accession>C0PWX5</accession>
<sequence length="407" mass="44612">MRQLLPGNTVWRNIRLATMDPQRQAPYGLVDNQALIVREGHICDIVPETQLPVSGDNIHDMQGRLVTPGLIDCHTHLVFAGNRAAEWEQRLNGASYQHISAQGGGINATVSATRACAEETLYLLARERMMRLASEGVTLLEIKSGYGLELATEEKLLRVAAKLAAENAIDISPTLLAAHATPAEYRDDPDGYITLVCETMIPQLWQKGLFDAVDLFCESVGFNVAQSERVLQTAKALGIPVKGHVEQLSLLGGAQLVSRYQGLSADHIEYLDEAGVAAMRDGGTVGVLLPGAFYFLRETQRPPVELLRRYQVPVAVASDFNPGTSPFCSLHLAMNMACVQFGLTPEEAWAGVTRHAARALGRQATHGQLRAGYRADFVVWDAEQPVEIVYEPGRNPLYQRVYRGQIS</sequence>
<name>HUTI_SALPC</name>
<gene>
    <name evidence="1" type="primary">hutI</name>
    <name type="ordered locus">SPC_0783</name>
</gene>
<organism>
    <name type="scientific">Salmonella paratyphi C (strain RKS4594)</name>
    <dbReference type="NCBI Taxonomy" id="476213"/>
    <lineage>
        <taxon>Bacteria</taxon>
        <taxon>Pseudomonadati</taxon>
        <taxon>Pseudomonadota</taxon>
        <taxon>Gammaproteobacteria</taxon>
        <taxon>Enterobacterales</taxon>
        <taxon>Enterobacteriaceae</taxon>
        <taxon>Salmonella</taxon>
    </lineage>
</organism>
<comment type="function">
    <text evidence="1">Catalyzes the hydrolytic cleavage of the carbon-nitrogen bond in imidazolone-5-propanoate to yield N-formimidoyl-L-glutamate. It is the third step in the universal histidine degradation pathway.</text>
</comment>
<comment type="catalytic activity">
    <reaction evidence="1">
        <text>4-imidazolone-5-propanoate + H2O = N-formimidoyl-L-glutamate</text>
        <dbReference type="Rhea" id="RHEA:23660"/>
        <dbReference type="ChEBI" id="CHEBI:15377"/>
        <dbReference type="ChEBI" id="CHEBI:58928"/>
        <dbReference type="ChEBI" id="CHEBI:77893"/>
        <dbReference type="EC" id="3.5.2.7"/>
    </reaction>
</comment>
<comment type="cofactor">
    <cofactor evidence="1">
        <name>Zn(2+)</name>
        <dbReference type="ChEBI" id="CHEBI:29105"/>
    </cofactor>
    <cofactor evidence="1">
        <name>Fe(3+)</name>
        <dbReference type="ChEBI" id="CHEBI:29034"/>
    </cofactor>
    <text evidence="1">Binds 1 zinc or iron ion per subunit.</text>
</comment>
<comment type="pathway">
    <text evidence="1">Amino-acid degradation; L-histidine degradation into L-glutamate; N-formimidoyl-L-glutamate from L-histidine: step 3/3.</text>
</comment>
<comment type="subcellular location">
    <subcellularLocation>
        <location evidence="1">Cytoplasm</location>
    </subcellularLocation>
</comment>
<comment type="similarity">
    <text evidence="1">Belongs to the metallo-dependent hydrolases superfamily. HutI family.</text>
</comment>
<protein>
    <recommendedName>
        <fullName evidence="1">Imidazolonepropionase</fullName>
        <ecNumber evidence="1">3.5.2.7</ecNumber>
    </recommendedName>
    <alternativeName>
        <fullName evidence="1">Imidazolone-5-propionate hydrolase</fullName>
    </alternativeName>
</protein>